<feature type="chain" id="PRO_0000217861" description="S-adenosyl-L-methionine-dependent tRNA 4-demethylwyosine synthase">
    <location>
        <begin position="1"/>
        <end position="810"/>
    </location>
</feature>
<feature type="domain" description="Flavodoxin-like" evidence="2">
    <location>
        <begin position="205"/>
        <end position="360"/>
    </location>
</feature>
<feature type="domain" description="Radical SAM core" evidence="3">
    <location>
        <begin position="463"/>
        <end position="713"/>
    </location>
</feature>
<feature type="region of interest" description="Disordered" evidence="4">
    <location>
        <begin position="86"/>
        <end position="116"/>
    </location>
</feature>
<feature type="region of interest" description="Disordered" evidence="4">
    <location>
        <begin position="156"/>
        <end position="176"/>
    </location>
</feature>
<feature type="region of interest" description="Disordered" evidence="4">
    <location>
        <begin position="374"/>
        <end position="407"/>
    </location>
</feature>
<feature type="region of interest" description="Disordered" evidence="4">
    <location>
        <begin position="782"/>
        <end position="810"/>
    </location>
</feature>
<feature type="compositionally biased region" description="Low complexity" evidence="4">
    <location>
        <begin position="104"/>
        <end position="116"/>
    </location>
</feature>
<feature type="compositionally biased region" description="Polar residues" evidence="4">
    <location>
        <begin position="159"/>
        <end position="172"/>
    </location>
</feature>
<feature type="compositionally biased region" description="Acidic residues" evidence="4">
    <location>
        <begin position="374"/>
        <end position="397"/>
    </location>
</feature>
<feature type="binding site" evidence="2">
    <location>
        <begin position="211"/>
        <end position="215"/>
    </location>
    <ligand>
        <name>FMN</name>
        <dbReference type="ChEBI" id="CHEBI:58210"/>
    </ligand>
</feature>
<feature type="binding site" evidence="2">
    <location>
        <begin position="304"/>
        <end position="337"/>
    </location>
    <ligand>
        <name>FMN</name>
        <dbReference type="ChEBI" id="CHEBI:58210"/>
    </ligand>
</feature>
<feature type="binding site">
    <location>
        <position position="479"/>
    </location>
    <ligand>
        <name>[4Fe-4S] cluster</name>
        <dbReference type="ChEBI" id="CHEBI:49883"/>
        <note>4Fe-4S-S-AdoMet</note>
    </ligand>
</feature>
<feature type="binding site">
    <location>
        <position position="483"/>
    </location>
    <ligand>
        <name>[4Fe-4S] cluster</name>
        <dbReference type="ChEBI" id="CHEBI:49883"/>
        <note>4Fe-4S-S-AdoMet</note>
    </ligand>
</feature>
<feature type="binding site">
    <location>
        <position position="486"/>
    </location>
    <ligand>
        <name>[4Fe-4S] cluster</name>
        <dbReference type="ChEBI" id="CHEBI:49883"/>
        <note>4Fe-4S-S-AdoMet</note>
    </ligand>
</feature>
<feature type="cross-link" description="Glycyl lysine isopeptide (Lys-Gly) (interchain with G-Cter in ubiquitin)" evidence="5">
    <location>
        <position position="496"/>
    </location>
</feature>
<feature type="mutagenesis site" description="Loss of function." evidence="9">
    <original>C</original>
    <variation>A</variation>
    <location>
        <position position="479"/>
    </location>
</feature>
<feature type="mutagenesis site" description="Loss of function." evidence="9">
    <original>C</original>
    <variation>A</variation>
    <location>
        <position position="483"/>
    </location>
</feature>
<feature type="mutagenesis site" description="Loss of function." evidence="9">
    <original>C</original>
    <variation>A</variation>
    <location>
        <position position="486"/>
    </location>
</feature>
<feature type="mutagenesis site" description="No effect." evidence="9">
    <original>E</original>
    <variation>A</variation>
    <location>
        <position position="532"/>
    </location>
</feature>
<feature type="mutagenesis site" description="Loss of function." evidence="9">
    <original>E</original>
    <variation>A</variation>
    <location>
        <position position="550"/>
    </location>
</feature>
<gene>
    <name type="primary">TYW1</name>
    <name type="ordered locus">YPL207W</name>
</gene>
<organism>
    <name type="scientific">Saccharomyces cerevisiae (strain ATCC 204508 / S288c)</name>
    <name type="common">Baker's yeast</name>
    <dbReference type="NCBI Taxonomy" id="559292"/>
    <lineage>
        <taxon>Eukaryota</taxon>
        <taxon>Fungi</taxon>
        <taxon>Dikarya</taxon>
        <taxon>Ascomycota</taxon>
        <taxon>Saccharomycotina</taxon>
        <taxon>Saccharomycetes</taxon>
        <taxon>Saccharomycetales</taxon>
        <taxon>Saccharomycetaceae</taxon>
        <taxon>Saccharomyces</taxon>
    </lineage>
</organism>
<reference key="1">
    <citation type="journal article" date="1997" name="Nature">
        <title>The nucleotide sequence of Saccharomyces cerevisiae chromosome XVI.</title>
        <authorList>
            <person name="Bussey H."/>
            <person name="Storms R.K."/>
            <person name="Ahmed A."/>
            <person name="Albermann K."/>
            <person name="Allen E."/>
            <person name="Ansorge W."/>
            <person name="Araujo R."/>
            <person name="Aparicio A."/>
            <person name="Barrell B.G."/>
            <person name="Badcock K."/>
            <person name="Benes V."/>
            <person name="Botstein D."/>
            <person name="Bowman S."/>
            <person name="Brueckner M."/>
            <person name="Carpenter J."/>
            <person name="Cherry J.M."/>
            <person name="Chung E."/>
            <person name="Churcher C.M."/>
            <person name="Coster F."/>
            <person name="Davis K."/>
            <person name="Davis R.W."/>
            <person name="Dietrich F.S."/>
            <person name="Delius H."/>
            <person name="DiPaolo T."/>
            <person name="Dubois E."/>
            <person name="Duesterhoeft A."/>
            <person name="Duncan M."/>
            <person name="Floeth M."/>
            <person name="Fortin N."/>
            <person name="Friesen J.D."/>
            <person name="Fritz C."/>
            <person name="Goffeau A."/>
            <person name="Hall J."/>
            <person name="Hebling U."/>
            <person name="Heumann K."/>
            <person name="Hilbert H."/>
            <person name="Hillier L.W."/>
            <person name="Hunicke-Smith S."/>
            <person name="Hyman R.W."/>
            <person name="Johnston M."/>
            <person name="Kalman S."/>
            <person name="Kleine K."/>
            <person name="Komp C."/>
            <person name="Kurdi O."/>
            <person name="Lashkari D."/>
            <person name="Lew H."/>
            <person name="Lin A."/>
            <person name="Lin D."/>
            <person name="Louis E.J."/>
            <person name="Marathe R."/>
            <person name="Messenguy F."/>
            <person name="Mewes H.-W."/>
            <person name="Mirtipati S."/>
            <person name="Moestl D."/>
            <person name="Mueller-Auer S."/>
            <person name="Namath A."/>
            <person name="Nentwich U."/>
            <person name="Oefner P."/>
            <person name="Pearson D."/>
            <person name="Petel F.X."/>
            <person name="Pohl T.M."/>
            <person name="Purnelle B."/>
            <person name="Rajandream M.A."/>
            <person name="Rechmann S."/>
            <person name="Rieger M."/>
            <person name="Riles L."/>
            <person name="Roberts D."/>
            <person name="Schaefer M."/>
            <person name="Scharfe M."/>
            <person name="Scherens B."/>
            <person name="Schramm S."/>
            <person name="Schroeder M."/>
            <person name="Sdicu A.-M."/>
            <person name="Tettelin H."/>
            <person name="Urrestarazu L.A."/>
            <person name="Ushinsky S."/>
            <person name="Vierendeels F."/>
            <person name="Vissers S."/>
            <person name="Voss H."/>
            <person name="Walsh S.V."/>
            <person name="Wambutt R."/>
            <person name="Wang Y."/>
            <person name="Wedler E."/>
            <person name="Wedler H."/>
            <person name="Winnett E."/>
            <person name="Zhong W.-W."/>
            <person name="Zollner A."/>
            <person name="Vo D.H."/>
            <person name="Hani J."/>
        </authorList>
    </citation>
    <scope>NUCLEOTIDE SEQUENCE [LARGE SCALE GENOMIC DNA]</scope>
    <source>
        <strain>ATCC 204508 / S288c</strain>
    </source>
</reference>
<reference key="2">
    <citation type="journal article" date="2014" name="G3 (Bethesda)">
        <title>The reference genome sequence of Saccharomyces cerevisiae: Then and now.</title>
        <authorList>
            <person name="Engel S.R."/>
            <person name="Dietrich F.S."/>
            <person name="Fisk D.G."/>
            <person name="Binkley G."/>
            <person name="Balakrishnan R."/>
            <person name="Costanzo M.C."/>
            <person name="Dwight S.S."/>
            <person name="Hitz B.C."/>
            <person name="Karra K."/>
            <person name="Nash R.S."/>
            <person name="Weng S."/>
            <person name="Wong E.D."/>
            <person name="Lloyd P."/>
            <person name="Skrzypek M.S."/>
            <person name="Miyasato S.R."/>
            <person name="Simison M."/>
            <person name="Cherry J.M."/>
        </authorList>
    </citation>
    <scope>GENOME REANNOTATION</scope>
    <source>
        <strain>ATCC 204508 / S288c</strain>
    </source>
</reference>
<reference key="3">
    <citation type="journal article" date="2003" name="Nature">
        <title>Global analysis of protein expression in yeast.</title>
        <authorList>
            <person name="Ghaemmaghami S."/>
            <person name="Huh W.-K."/>
            <person name="Bower K."/>
            <person name="Howson R.W."/>
            <person name="Belle A."/>
            <person name="Dephoure N."/>
            <person name="O'Shea E.K."/>
            <person name="Weissman J.S."/>
        </authorList>
    </citation>
    <scope>LEVEL OF PROTEIN EXPRESSION [LARGE SCALE ANALYSIS]</scope>
</reference>
<reference key="4">
    <citation type="journal article" date="2003" name="Nat. Biotechnol.">
        <title>A proteomics approach to understanding protein ubiquitination.</title>
        <authorList>
            <person name="Peng J."/>
            <person name="Schwartz D."/>
            <person name="Elias J.E."/>
            <person name="Thoreen C.C."/>
            <person name="Cheng D."/>
            <person name="Marsischky G."/>
            <person name="Roelofs J."/>
            <person name="Finley D."/>
            <person name="Gygi S.P."/>
        </authorList>
    </citation>
    <scope>UBIQUITINATION [LARGE SCALE ANALYSIS] AT LYS-496</scope>
    <scope>IDENTIFICATION BY MASS SPECTROMETRY</scope>
    <source>
        <strain>SUB592</strain>
    </source>
</reference>
<reference key="5">
    <citation type="journal article" date="2003" name="Nature">
        <title>Global analysis of protein localization in budding yeast.</title>
        <authorList>
            <person name="Huh W.-K."/>
            <person name="Falvo J.V."/>
            <person name="Gerke L.C."/>
            <person name="Carroll A.S."/>
            <person name="Howson R.W."/>
            <person name="Weissman J.S."/>
            <person name="O'Shea E.K."/>
        </authorList>
    </citation>
    <scope>SUBCELLULAR LOCATION [LARGE SCALE ANALYSIS]</scope>
</reference>
<reference key="6">
    <citation type="journal article" date="2005" name="J. Biol. Chem.">
        <title>Discovery of a gene family critical to wyosine base formation in a subset of phenylalanine-specific transfer RNAs.</title>
        <authorList>
            <person name="Waas W.F."/>
            <person name="de Crecy-Lagard V."/>
            <person name="Schimmel P."/>
        </authorList>
    </citation>
    <scope>FUNCTION</scope>
</reference>
<reference key="7">
    <citation type="journal article" date="2006" name="EMBO J.">
        <title>Biosynthesis of wybutosine, a hyper-modified nucleoside in eukaryotic phenylalanine tRNA.</title>
        <authorList>
            <person name="Noma A."/>
            <person name="Kirino Y."/>
            <person name="Ikeuchi Y."/>
            <person name="Suzuki T."/>
        </authorList>
    </citation>
    <scope>FUNCTION</scope>
    <scope>COFACTOR</scope>
    <scope>MUTAGENESIS OF CYS-479; CYS-483; CYS-486; GLU-532 AND GLU-550</scope>
</reference>
<proteinExistence type="evidence at protein level"/>
<protein>
    <recommendedName>
        <fullName>S-adenosyl-L-methionine-dependent tRNA 4-demethylwyosine synthase</fullName>
        <ecNumber>4.1.3.44</ecNumber>
    </recommendedName>
    <alternativeName>
        <fullName>tRNA wybutosine-synthesizing protein 1</fullName>
    </alternativeName>
</protein>
<accession>Q08960</accession>
<accession>D6W3G3</accession>
<keyword id="KW-0004">4Fe-4S</keyword>
<keyword id="KW-0256">Endoplasmic reticulum</keyword>
<keyword id="KW-0408">Iron</keyword>
<keyword id="KW-0411">Iron-sulfur</keyword>
<keyword id="KW-1017">Isopeptide bond</keyword>
<keyword id="KW-0456">Lyase</keyword>
<keyword id="KW-0479">Metal-binding</keyword>
<keyword id="KW-0547">Nucleotide-binding</keyword>
<keyword id="KW-1185">Reference proteome</keyword>
<keyword id="KW-0949">S-adenosyl-L-methionine</keyword>
<keyword id="KW-0819">tRNA processing</keyword>
<keyword id="KW-0832">Ubl conjugation</keyword>
<dbReference type="EC" id="4.1.3.44"/>
<dbReference type="EMBL" id="Z73563">
    <property type="protein sequence ID" value="CAA97922.1"/>
    <property type="molecule type" value="Genomic_DNA"/>
</dbReference>
<dbReference type="EMBL" id="Z73562">
    <property type="protein sequence ID" value="CAA97921.1"/>
    <property type="molecule type" value="Genomic_DNA"/>
</dbReference>
<dbReference type="EMBL" id="BK006949">
    <property type="protein sequence ID" value="DAA11229.1"/>
    <property type="molecule type" value="Genomic_DNA"/>
</dbReference>
<dbReference type="PIR" id="S65226">
    <property type="entry name" value="S65226"/>
</dbReference>
<dbReference type="RefSeq" id="NP_015117.1">
    <property type="nucleotide sequence ID" value="NM_001184021.1"/>
</dbReference>
<dbReference type="SMR" id="Q08960"/>
<dbReference type="BioGRID" id="35978">
    <property type="interactions" value="80"/>
</dbReference>
<dbReference type="DIP" id="DIP-3972N"/>
<dbReference type="FunCoup" id="Q08960">
    <property type="interactions" value="752"/>
</dbReference>
<dbReference type="IntAct" id="Q08960">
    <property type="interactions" value="20"/>
</dbReference>
<dbReference type="MINT" id="Q08960"/>
<dbReference type="STRING" id="4932.YPL207W"/>
<dbReference type="iPTMnet" id="Q08960"/>
<dbReference type="PaxDb" id="4932-YPL207W"/>
<dbReference type="PeptideAtlas" id="Q08960"/>
<dbReference type="EnsemblFungi" id="YPL207W_mRNA">
    <property type="protein sequence ID" value="YPL207W"/>
    <property type="gene ID" value="YPL207W"/>
</dbReference>
<dbReference type="GeneID" id="855894"/>
<dbReference type="KEGG" id="sce:YPL207W"/>
<dbReference type="AGR" id="SGD:S000006128"/>
<dbReference type="SGD" id="S000006128">
    <property type="gene designation" value="TYW1"/>
</dbReference>
<dbReference type="VEuPathDB" id="FungiDB:YPL207W"/>
<dbReference type="eggNOG" id="KOG1160">
    <property type="taxonomic scope" value="Eukaryota"/>
</dbReference>
<dbReference type="GeneTree" id="ENSGT00510000047059"/>
<dbReference type="HOGENOM" id="CLU_007952_1_2_1"/>
<dbReference type="InParanoid" id="Q08960"/>
<dbReference type="OMA" id="FHVNGKW"/>
<dbReference type="OrthoDB" id="271553at2759"/>
<dbReference type="BioCyc" id="MetaCyc:G3O-34098-MONOMER"/>
<dbReference type="BioCyc" id="YEAST:G3O-34098-MONOMER"/>
<dbReference type="BRENDA" id="4.1.3.44">
    <property type="organism ID" value="984"/>
</dbReference>
<dbReference type="UniPathway" id="UPA00375"/>
<dbReference type="BioGRID-ORCS" id="855894">
    <property type="hits" value="0 hits in 10 CRISPR screens"/>
</dbReference>
<dbReference type="PRO" id="PR:Q08960"/>
<dbReference type="Proteomes" id="UP000002311">
    <property type="component" value="Chromosome XVI"/>
</dbReference>
<dbReference type="RNAct" id="Q08960">
    <property type="molecule type" value="protein"/>
</dbReference>
<dbReference type="GO" id="GO:0005737">
    <property type="term" value="C:cytoplasm"/>
    <property type="evidence" value="ECO:0000304"/>
    <property type="project" value="Reactome"/>
</dbReference>
<dbReference type="GO" id="GO:0005783">
    <property type="term" value="C:endoplasmic reticulum"/>
    <property type="evidence" value="ECO:0007005"/>
    <property type="project" value="SGD"/>
</dbReference>
<dbReference type="GO" id="GO:0051539">
    <property type="term" value="F:4 iron, 4 sulfur cluster binding"/>
    <property type="evidence" value="ECO:0007669"/>
    <property type="project" value="UniProtKB-KW"/>
</dbReference>
<dbReference type="GO" id="GO:0010181">
    <property type="term" value="F:FMN binding"/>
    <property type="evidence" value="ECO:0007669"/>
    <property type="project" value="InterPro"/>
</dbReference>
<dbReference type="GO" id="GO:0046872">
    <property type="term" value="F:metal ion binding"/>
    <property type="evidence" value="ECO:0007669"/>
    <property type="project" value="UniProtKB-KW"/>
</dbReference>
<dbReference type="GO" id="GO:1904047">
    <property type="term" value="F:S-adenosyl-L-methionine binding"/>
    <property type="evidence" value="ECO:0000314"/>
    <property type="project" value="SGD"/>
</dbReference>
<dbReference type="GO" id="GO:0102521">
    <property type="term" value="F:tRNA-4-demethylwyosine synthase activity"/>
    <property type="evidence" value="ECO:0007669"/>
    <property type="project" value="UniProtKB-EC"/>
</dbReference>
<dbReference type="GO" id="GO:0031591">
    <property type="term" value="P:wybutosine biosynthetic process"/>
    <property type="evidence" value="ECO:0000314"/>
    <property type="project" value="SGD"/>
</dbReference>
<dbReference type="FunFam" id="3.20.20.70:FF:000196">
    <property type="entry name" value="S-adenosyl-L-methionine-dependent tRNA 4-demethylwyosine synthase"/>
    <property type="match status" value="1"/>
</dbReference>
<dbReference type="Gene3D" id="3.40.50.360">
    <property type="match status" value="1"/>
</dbReference>
<dbReference type="Gene3D" id="3.20.20.70">
    <property type="entry name" value="Aldolase class I"/>
    <property type="match status" value="1"/>
</dbReference>
<dbReference type="InterPro" id="IPR013785">
    <property type="entry name" value="Aldolase_TIM"/>
</dbReference>
<dbReference type="InterPro" id="IPR008254">
    <property type="entry name" value="Flavodoxin/NO_synth"/>
</dbReference>
<dbReference type="InterPro" id="IPR029039">
    <property type="entry name" value="Flavoprotein-like_sf"/>
</dbReference>
<dbReference type="InterPro" id="IPR007197">
    <property type="entry name" value="rSAM"/>
</dbReference>
<dbReference type="InterPro" id="IPR013917">
    <property type="entry name" value="tRNA_wybutosine-synth"/>
</dbReference>
<dbReference type="InterPro" id="IPR034556">
    <property type="entry name" value="tRNA_wybutosine-synthase"/>
</dbReference>
<dbReference type="PANTHER" id="PTHR13930">
    <property type="entry name" value="S-ADENOSYL-L-METHIONINE-DEPENDENT TRNA 4-DEMETHYLWYOSINE SYNTHASE"/>
    <property type="match status" value="1"/>
</dbReference>
<dbReference type="PANTHER" id="PTHR13930:SF0">
    <property type="entry name" value="S-ADENOSYL-L-METHIONINE-DEPENDENT TRNA 4-DEMETHYLWYOSINE SYNTHASE TYW1-RELATED"/>
    <property type="match status" value="1"/>
</dbReference>
<dbReference type="Pfam" id="PF00258">
    <property type="entry name" value="Flavodoxin_1"/>
    <property type="match status" value="1"/>
</dbReference>
<dbReference type="Pfam" id="PF04055">
    <property type="entry name" value="Radical_SAM"/>
    <property type="match status" value="1"/>
</dbReference>
<dbReference type="Pfam" id="PF08608">
    <property type="entry name" value="Wyosine_form"/>
    <property type="match status" value="1"/>
</dbReference>
<dbReference type="SFLD" id="SFLDS00029">
    <property type="entry name" value="Radical_SAM"/>
    <property type="match status" value="1"/>
</dbReference>
<dbReference type="SFLD" id="SFLDF00284">
    <property type="entry name" value="tRNA_wybutosine-synthesizing"/>
    <property type="match status" value="1"/>
</dbReference>
<dbReference type="SUPFAM" id="SSF52218">
    <property type="entry name" value="Flavoproteins"/>
    <property type="match status" value="1"/>
</dbReference>
<dbReference type="SUPFAM" id="SSF102114">
    <property type="entry name" value="Radical SAM enzymes"/>
    <property type="match status" value="1"/>
</dbReference>
<dbReference type="PROSITE" id="PS50902">
    <property type="entry name" value="FLAVODOXIN_LIKE"/>
    <property type="match status" value="1"/>
</dbReference>
<dbReference type="PROSITE" id="PS51918">
    <property type="entry name" value="RADICAL_SAM"/>
    <property type="match status" value="1"/>
</dbReference>
<name>TYW1_YEAST</name>
<comment type="function">
    <text evidence="1 8 9">Component of the wybutosine biosynthesis pathway. Wybutosine is a hyper modified guanosine with a tricyclic base found at the 3'-position adjacent to the anticodon of eukaryotic phenylalanine tRNA. Catalyzes the condensation of N-methylguanine with 2 carbon atoms from pyruvate to form the tricyclic 4-demethylwyosine, an intermediate in wybutosine biosynthesis (By similarity).</text>
</comment>
<comment type="catalytic activity">
    <reaction>
        <text>N(1)-methylguanosine(37) in tRNA(Phe) + pyruvate + S-adenosyl-L-methionine = 4-demethylwyosine(37) in tRNA(Phe) + 5'-deoxyadenosine + L-methionine + CO2 + H2O</text>
        <dbReference type="Rhea" id="RHEA:36347"/>
        <dbReference type="Rhea" id="RHEA-COMP:10164"/>
        <dbReference type="Rhea" id="RHEA-COMP:10165"/>
        <dbReference type="ChEBI" id="CHEBI:15361"/>
        <dbReference type="ChEBI" id="CHEBI:15377"/>
        <dbReference type="ChEBI" id="CHEBI:16526"/>
        <dbReference type="ChEBI" id="CHEBI:17319"/>
        <dbReference type="ChEBI" id="CHEBI:57844"/>
        <dbReference type="ChEBI" id="CHEBI:59789"/>
        <dbReference type="ChEBI" id="CHEBI:64315"/>
        <dbReference type="ChEBI" id="CHEBI:73542"/>
        <dbReference type="EC" id="4.1.3.44"/>
    </reaction>
</comment>
<comment type="cofactor">
    <cofactor evidence="9">
        <name>[4Fe-4S] cluster</name>
        <dbReference type="ChEBI" id="CHEBI:49883"/>
    </cofactor>
    <text evidence="9">Binds 1 [4Fe-4S] cluster. The cluster is coordinated with 3 cysteines and an exchangeable S-adenosyl-L-methionine.</text>
</comment>
<comment type="pathway">
    <text>tRNA modification; wybutosine-tRNA(Phe) biosynthesis.</text>
</comment>
<comment type="subcellular location">
    <subcellularLocation>
        <location evidence="6">Endoplasmic reticulum</location>
    </subcellularLocation>
</comment>
<comment type="miscellaneous">
    <text evidence="7">Present with 5410 molecules/cell in log phase SD medium.</text>
</comment>
<comment type="similarity">
    <text evidence="10">Belongs to the TYW1 family.</text>
</comment>
<evidence type="ECO:0000250" key="1"/>
<evidence type="ECO:0000255" key="2">
    <source>
        <dbReference type="PROSITE-ProRule" id="PRU00088"/>
    </source>
</evidence>
<evidence type="ECO:0000255" key="3">
    <source>
        <dbReference type="PROSITE-ProRule" id="PRU01266"/>
    </source>
</evidence>
<evidence type="ECO:0000256" key="4">
    <source>
        <dbReference type="SAM" id="MobiDB-lite"/>
    </source>
</evidence>
<evidence type="ECO:0000269" key="5">
    <source>
    </source>
</evidence>
<evidence type="ECO:0000269" key="6">
    <source>
    </source>
</evidence>
<evidence type="ECO:0000269" key="7">
    <source>
    </source>
</evidence>
<evidence type="ECO:0000269" key="8">
    <source>
    </source>
</evidence>
<evidence type="ECO:0000269" key="9">
    <source>
    </source>
</evidence>
<evidence type="ECO:0000305" key="10"/>
<sequence>MDGFRVAGALVVGALTAAYLYFGGRFSIALVIIVGYGIYCNEASGGSQDSQEKLDLNKQQKKPCCSDKKIADGGKKTGGCCSDKKNGGGKGGGCCSSKGGKKGGCCSSKGGKKGGCCSSKKNIGDNENTATEVEKAVNYPVTVDFTEVFRKPTKKRSSTPKVFSKNSSSNSRVGKKLSVSKKIGPDGLIKSALTISNETLLSSQIYVLYSSLQGAASKAAKSVYDKLKELDELTNEPKLLNLDDLSDFDDYFINVPVENALYVLVLPSYDIDCPLDYFLQTLEENANDFRVDSFPLRKLVGYTVLGLGDSESWPEKFCYQAKRADHWISRLGGRRIFPLGKVCMKTGGSAKIDEWTSLLAETLKDDEPIIYEYDENADSEEDEEEGNGSDELGDVEDIGGKGSNGKFSGADEIKQMVAKDSPTYKNLTKQGYKVIGSHSGVKICRWTKNELRGKGSCYKKSLFNIASSRCMELTPSLACSSKCVFCWRHGTNPVSKNWRWEVDEPEYILENALKGHYSMIKQMRGVPGVIAERFAKAFEVRHCALSLVGEPILYPHINKFIQLLHQKGITSFLVCNAQHPEALRNIVKVTQLYVSIDAPTKTELKKVDRPLYKDFWERMVECLEILKTVQNHQRTVFRLTLVKGFNMGDVSAYADLVQRGLPGFIEVKGATFSGSSDGNGNPLTMQNIPFYEECVKFVKAFTTELQRRGLHYDLAAEHAHSNCLLIADTKFKINGEWHTHIDFDKFFVLLNSGKDFTYMDYLEKTPEWALFGNGGFAPGNTRVYRKDKKKQNKENQETTTRETPLPPIPA</sequence>